<name>END4_CHLTR</name>
<protein>
    <recommendedName>
        <fullName evidence="1">Probable endonuclease 4</fullName>
        <ecNumber evidence="1">3.1.21.2</ecNumber>
    </recommendedName>
    <alternativeName>
        <fullName evidence="1">Endodeoxyribonuclease IV</fullName>
    </alternativeName>
    <alternativeName>
        <fullName evidence="1">Endonuclease IV</fullName>
    </alternativeName>
</protein>
<proteinExistence type="inferred from homology"/>
<sequence length="288" mass="31653">MFILPPPQEALLGAHTSAAGGLHNALYEGRDIGATTVQLFTANQRQWKRRTLTQEMVDQFRIALNETSLSYIMSHAGYLNNPGAPNPEILEKTRVCMHQEIADCISLGISFVNFHPGAALSDSKESCLDRTIASFSQMAPLFENNPPLVVLLETTAGQGSLIGSSFEELAYLIQGIKAHIPIGVCLDTCHIFAAGYDISSVAGWEQVLKHFDAVIGLSFLRAIHLNDSVFALGKNKDRHAPIGEGCIGSDSFCFLMQDERTRMLPKYLETPGGPDLWTKEIRYLQKVC</sequence>
<gene>
    <name evidence="1" type="primary">nfo</name>
    <name type="ordered locus">CT_625</name>
</gene>
<keyword id="KW-0227">DNA damage</keyword>
<keyword id="KW-0234">DNA repair</keyword>
<keyword id="KW-0255">Endonuclease</keyword>
<keyword id="KW-0378">Hydrolase</keyword>
<keyword id="KW-0479">Metal-binding</keyword>
<keyword id="KW-0540">Nuclease</keyword>
<keyword id="KW-1185">Reference proteome</keyword>
<keyword id="KW-0862">Zinc</keyword>
<evidence type="ECO:0000255" key="1">
    <source>
        <dbReference type="HAMAP-Rule" id="MF_00152"/>
    </source>
</evidence>
<accession>O84630</accession>
<organism>
    <name type="scientific">Chlamydia trachomatis serovar D (strain ATCC VR-885 / DSM 19411 / UW-3/Cx)</name>
    <dbReference type="NCBI Taxonomy" id="272561"/>
    <lineage>
        <taxon>Bacteria</taxon>
        <taxon>Pseudomonadati</taxon>
        <taxon>Chlamydiota</taxon>
        <taxon>Chlamydiia</taxon>
        <taxon>Chlamydiales</taxon>
        <taxon>Chlamydiaceae</taxon>
        <taxon>Chlamydia/Chlamydophila group</taxon>
        <taxon>Chlamydia</taxon>
    </lineage>
</organism>
<feature type="chain" id="PRO_0000190835" description="Probable endonuclease 4">
    <location>
        <begin position="1"/>
        <end position="288"/>
    </location>
</feature>
<feature type="binding site" evidence="1">
    <location>
        <position position="75"/>
    </location>
    <ligand>
        <name>Zn(2+)</name>
        <dbReference type="ChEBI" id="CHEBI:29105"/>
        <label>1</label>
    </ligand>
</feature>
<feature type="binding site" evidence="1">
    <location>
        <position position="115"/>
    </location>
    <ligand>
        <name>Zn(2+)</name>
        <dbReference type="ChEBI" id="CHEBI:29105"/>
        <label>1</label>
    </ligand>
</feature>
<feature type="binding site" evidence="1">
    <location>
        <position position="153"/>
    </location>
    <ligand>
        <name>Zn(2+)</name>
        <dbReference type="ChEBI" id="CHEBI:29105"/>
        <label>1</label>
    </ligand>
</feature>
<feature type="binding site" evidence="1">
    <location>
        <position position="153"/>
    </location>
    <ligand>
        <name>Zn(2+)</name>
        <dbReference type="ChEBI" id="CHEBI:29105"/>
        <label>2</label>
    </ligand>
</feature>
<feature type="binding site" evidence="1">
    <location>
        <position position="187"/>
    </location>
    <ligand>
        <name>Zn(2+)</name>
        <dbReference type="ChEBI" id="CHEBI:29105"/>
        <label>2</label>
    </ligand>
</feature>
<feature type="binding site" evidence="1">
    <location>
        <position position="190"/>
    </location>
    <ligand>
        <name>Zn(2+)</name>
        <dbReference type="ChEBI" id="CHEBI:29105"/>
        <label>3</label>
    </ligand>
</feature>
<feature type="binding site" evidence="1">
    <location>
        <position position="224"/>
    </location>
    <ligand>
        <name>Zn(2+)</name>
        <dbReference type="ChEBI" id="CHEBI:29105"/>
        <label>2</label>
    </ligand>
</feature>
<feature type="binding site" evidence="1">
    <location>
        <position position="237"/>
    </location>
    <ligand>
        <name>Zn(2+)</name>
        <dbReference type="ChEBI" id="CHEBI:29105"/>
        <label>3</label>
    </ligand>
</feature>
<feature type="binding site" evidence="1">
    <location>
        <position position="239"/>
    </location>
    <ligand>
        <name>Zn(2+)</name>
        <dbReference type="ChEBI" id="CHEBI:29105"/>
        <label>3</label>
    </ligand>
</feature>
<feature type="binding site" evidence="1">
    <location>
        <position position="269"/>
    </location>
    <ligand>
        <name>Zn(2+)</name>
        <dbReference type="ChEBI" id="CHEBI:29105"/>
        <label>2</label>
    </ligand>
</feature>
<dbReference type="EC" id="3.1.21.2" evidence="1"/>
<dbReference type="EMBL" id="AE001273">
    <property type="protein sequence ID" value="AAC68229.1"/>
    <property type="molecule type" value="Genomic_DNA"/>
</dbReference>
<dbReference type="PIR" id="B71491">
    <property type="entry name" value="B71491"/>
</dbReference>
<dbReference type="RefSeq" id="NP_220142.1">
    <property type="nucleotide sequence ID" value="NC_000117.1"/>
</dbReference>
<dbReference type="RefSeq" id="WP_009871993.1">
    <property type="nucleotide sequence ID" value="NC_000117.1"/>
</dbReference>
<dbReference type="SMR" id="O84630"/>
<dbReference type="FunCoup" id="O84630">
    <property type="interactions" value="81"/>
</dbReference>
<dbReference type="STRING" id="272561.CT_625"/>
<dbReference type="EnsemblBacteria" id="AAC68229">
    <property type="protein sequence ID" value="AAC68229"/>
    <property type="gene ID" value="CT_625"/>
</dbReference>
<dbReference type="GeneID" id="884404"/>
<dbReference type="KEGG" id="ctr:CT_625"/>
<dbReference type="PATRIC" id="fig|272561.5.peg.682"/>
<dbReference type="HOGENOM" id="CLU_025885_0_1_0"/>
<dbReference type="InParanoid" id="O84630"/>
<dbReference type="OrthoDB" id="9805666at2"/>
<dbReference type="Proteomes" id="UP000000431">
    <property type="component" value="Chromosome"/>
</dbReference>
<dbReference type="GO" id="GO:0008833">
    <property type="term" value="F:deoxyribonuclease IV (phage-T4-induced) activity"/>
    <property type="evidence" value="ECO:0007669"/>
    <property type="project" value="UniProtKB-UniRule"/>
</dbReference>
<dbReference type="GO" id="GO:0003677">
    <property type="term" value="F:DNA binding"/>
    <property type="evidence" value="ECO:0007669"/>
    <property type="project" value="InterPro"/>
</dbReference>
<dbReference type="GO" id="GO:0003906">
    <property type="term" value="F:DNA-(apurinic or apyrimidinic site) endonuclease activity"/>
    <property type="evidence" value="ECO:0000318"/>
    <property type="project" value="GO_Central"/>
</dbReference>
<dbReference type="GO" id="GO:0008081">
    <property type="term" value="F:phosphoric diester hydrolase activity"/>
    <property type="evidence" value="ECO:0000318"/>
    <property type="project" value="GO_Central"/>
</dbReference>
<dbReference type="GO" id="GO:0008270">
    <property type="term" value="F:zinc ion binding"/>
    <property type="evidence" value="ECO:0007669"/>
    <property type="project" value="UniProtKB-UniRule"/>
</dbReference>
<dbReference type="GO" id="GO:0006284">
    <property type="term" value="P:base-excision repair"/>
    <property type="evidence" value="ECO:0000318"/>
    <property type="project" value="GO_Central"/>
</dbReference>
<dbReference type="CDD" id="cd00019">
    <property type="entry name" value="AP2Ec"/>
    <property type="match status" value="1"/>
</dbReference>
<dbReference type="FunFam" id="3.20.20.150:FF:000001">
    <property type="entry name" value="Probable endonuclease 4"/>
    <property type="match status" value="1"/>
</dbReference>
<dbReference type="Gene3D" id="3.20.20.150">
    <property type="entry name" value="Divalent-metal-dependent TIM barrel enzymes"/>
    <property type="match status" value="1"/>
</dbReference>
<dbReference type="HAMAP" id="MF_00152">
    <property type="entry name" value="Nfo"/>
    <property type="match status" value="1"/>
</dbReference>
<dbReference type="InterPro" id="IPR001719">
    <property type="entry name" value="AP_endonuc_2"/>
</dbReference>
<dbReference type="InterPro" id="IPR018246">
    <property type="entry name" value="AP_endonuc_F2_Zn_BS"/>
</dbReference>
<dbReference type="InterPro" id="IPR036237">
    <property type="entry name" value="Xyl_isomerase-like_sf"/>
</dbReference>
<dbReference type="InterPro" id="IPR013022">
    <property type="entry name" value="Xyl_isomerase-like_TIM-brl"/>
</dbReference>
<dbReference type="NCBIfam" id="TIGR00587">
    <property type="entry name" value="nfo"/>
    <property type="match status" value="1"/>
</dbReference>
<dbReference type="NCBIfam" id="NF002197">
    <property type="entry name" value="PRK01060.1-2"/>
    <property type="match status" value="1"/>
</dbReference>
<dbReference type="PANTHER" id="PTHR21445:SF0">
    <property type="entry name" value="APURINIC-APYRIMIDINIC ENDONUCLEASE"/>
    <property type="match status" value="1"/>
</dbReference>
<dbReference type="PANTHER" id="PTHR21445">
    <property type="entry name" value="ENDONUCLEASE IV ENDODEOXYRIBONUCLEASE IV"/>
    <property type="match status" value="1"/>
</dbReference>
<dbReference type="Pfam" id="PF01261">
    <property type="entry name" value="AP_endonuc_2"/>
    <property type="match status" value="1"/>
</dbReference>
<dbReference type="SMART" id="SM00518">
    <property type="entry name" value="AP2Ec"/>
    <property type="match status" value="1"/>
</dbReference>
<dbReference type="SUPFAM" id="SSF51658">
    <property type="entry name" value="Xylose isomerase-like"/>
    <property type="match status" value="1"/>
</dbReference>
<dbReference type="PROSITE" id="PS00729">
    <property type="entry name" value="AP_NUCLEASE_F2_1"/>
    <property type="match status" value="1"/>
</dbReference>
<dbReference type="PROSITE" id="PS00730">
    <property type="entry name" value="AP_NUCLEASE_F2_2"/>
    <property type="match status" value="1"/>
</dbReference>
<dbReference type="PROSITE" id="PS00731">
    <property type="entry name" value="AP_NUCLEASE_F2_3"/>
    <property type="match status" value="1"/>
</dbReference>
<dbReference type="PROSITE" id="PS51432">
    <property type="entry name" value="AP_NUCLEASE_F2_4"/>
    <property type="match status" value="1"/>
</dbReference>
<reference key="1">
    <citation type="journal article" date="1998" name="Science">
        <title>Genome sequence of an obligate intracellular pathogen of humans: Chlamydia trachomatis.</title>
        <authorList>
            <person name="Stephens R.S."/>
            <person name="Kalman S."/>
            <person name="Lammel C.J."/>
            <person name="Fan J."/>
            <person name="Marathe R."/>
            <person name="Aravind L."/>
            <person name="Mitchell W.P."/>
            <person name="Olinger L."/>
            <person name="Tatusov R.L."/>
            <person name="Zhao Q."/>
            <person name="Koonin E.V."/>
            <person name="Davis R.W."/>
        </authorList>
    </citation>
    <scope>NUCLEOTIDE SEQUENCE [LARGE SCALE GENOMIC DNA]</scope>
    <source>
        <strain>ATCC VR-885 / DSM 19411 / UW-3/Cx</strain>
    </source>
</reference>
<comment type="function">
    <text evidence="1">Endonuclease IV plays a role in DNA repair. It cleaves phosphodiester bonds at apurinic or apyrimidinic (AP) sites, generating a 3'-hydroxyl group and a 5'-terminal sugar phosphate.</text>
</comment>
<comment type="catalytic activity">
    <reaction evidence="1">
        <text>Endonucleolytic cleavage to 5'-phosphooligonucleotide end-products.</text>
        <dbReference type="EC" id="3.1.21.2"/>
    </reaction>
</comment>
<comment type="cofactor">
    <cofactor evidence="1">
        <name>Zn(2+)</name>
        <dbReference type="ChEBI" id="CHEBI:29105"/>
    </cofactor>
    <text evidence="1">Binds 3 Zn(2+) ions.</text>
</comment>
<comment type="similarity">
    <text evidence="1">Belongs to the AP endonuclease 2 family.</text>
</comment>